<gene>
    <name evidence="1" type="primary">fabH</name>
    <name type="ordered locus">Tbd_1551</name>
</gene>
<keyword id="KW-0012">Acyltransferase</keyword>
<keyword id="KW-0963">Cytoplasm</keyword>
<keyword id="KW-0275">Fatty acid biosynthesis</keyword>
<keyword id="KW-0276">Fatty acid metabolism</keyword>
<keyword id="KW-0444">Lipid biosynthesis</keyword>
<keyword id="KW-0443">Lipid metabolism</keyword>
<keyword id="KW-0511">Multifunctional enzyme</keyword>
<keyword id="KW-1185">Reference proteome</keyword>
<keyword id="KW-0808">Transferase</keyword>
<feature type="chain" id="PRO_1000056437" description="Beta-ketoacyl-[acyl-carrier-protein] synthase III">
    <location>
        <begin position="1"/>
        <end position="319"/>
    </location>
</feature>
<feature type="region of interest" description="ACP-binding" evidence="1">
    <location>
        <begin position="247"/>
        <end position="251"/>
    </location>
</feature>
<feature type="active site" evidence="1">
    <location>
        <position position="114"/>
    </location>
</feature>
<feature type="active site" evidence="1">
    <location>
        <position position="246"/>
    </location>
</feature>
<feature type="active site" evidence="1">
    <location>
        <position position="276"/>
    </location>
</feature>
<sequence>MTYSRILGTGGYLPARILTNADLEKLVDTNDQWIVDRTGIRERHIAADGEFTSDLATAAARAALEAANLAADDIDLLLVATTTPDLVFPSTACIVQSKLGMTNGKPAFDLQAVCSGFVYALSVADQFIKGGAAKHVLVVGAETLSRITDWNDRSNCILWGDGAGAVVVGASSEPGIIATHIHADGRHKELLRTTTGPSSGSKTPALMRMEGNAVFKMAVNTLDRIVDETLEANGLAKTDIDWLVPHQANIRIISATAKKLGMSMDNVVTTVAGHGNTSAASVPLAFDAAVRDGRIKRGQIVLMEAFGGGFTWGSALLRY</sequence>
<organism>
    <name type="scientific">Thiobacillus denitrificans (strain ATCC 25259 / T1)</name>
    <dbReference type="NCBI Taxonomy" id="292415"/>
    <lineage>
        <taxon>Bacteria</taxon>
        <taxon>Pseudomonadati</taxon>
        <taxon>Pseudomonadota</taxon>
        <taxon>Betaproteobacteria</taxon>
        <taxon>Nitrosomonadales</taxon>
        <taxon>Thiobacillaceae</taxon>
        <taxon>Thiobacillus</taxon>
    </lineage>
</organism>
<proteinExistence type="inferred from homology"/>
<protein>
    <recommendedName>
        <fullName evidence="1">Beta-ketoacyl-[acyl-carrier-protein] synthase III</fullName>
        <shortName evidence="1">Beta-ketoacyl-ACP synthase III</shortName>
        <shortName evidence="1">KAS III</shortName>
        <ecNumber evidence="1">2.3.1.180</ecNumber>
    </recommendedName>
    <alternativeName>
        <fullName evidence="1">3-oxoacyl-[acyl-carrier-protein] synthase 3</fullName>
    </alternativeName>
    <alternativeName>
        <fullName evidence="1">3-oxoacyl-[acyl-carrier-protein] synthase III</fullName>
    </alternativeName>
</protein>
<evidence type="ECO:0000255" key="1">
    <source>
        <dbReference type="HAMAP-Rule" id="MF_01815"/>
    </source>
</evidence>
<dbReference type="EC" id="2.3.1.180" evidence="1"/>
<dbReference type="EMBL" id="CP000116">
    <property type="protein sequence ID" value="AAZ97504.1"/>
    <property type="molecule type" value="Genomic_DNA"/>
</dbReference>
<dbReference type="RefSeq" id="WP_011312063.1">
    <property type="nucleotide sequence ID" value="NC_007404.1"/>
</dbReference>
<dbReference type="SMR" id="Q3SIM4"/>
<dbReference type="STRING" id="292415.Tbd_1551"/>
<dbReference type="KEGG" id="tbd:Tbd_1551"/>
<dbReference type="eggNOG" id="COG0332">
    <property type="taxonomic scope" value="Bacteria"/>
</dbReference>
<dbReference type="HOGENOM" id="CLU_039592_4_1_4"/>
<dbReference type="OrthoDB" id="9815506at2"/>
<dbReference type="UniPathway" id="UPA00094"/>
<dbReference type="Proteomes" id="UP000008291">
    <property type="component" value="Chromosome"/>
</dbReference>
<dbReference type="GO" id="GO:0005737">
    <property type="term" value="C:cytoplasm"/>
    <property type="evidence" value="ECO:0007669"/>
    <property type="project" value="UniProtKB-SubCell"/>
</dbReference>
<dbReference type="GO" id="GO:0004315">
    <property type="term" value="F:3-oxoacyl-[acyl-carrier-protein] synthase activity"/>
    <property type="evidence" value="ECO:0007669"/>
    <property type="project" value="InterPro"/>
</dbReference>
<dbReference type="GO" id="GO:0033818">
    <property type="term" value="F:beta-ketoacyl-acyl-carrier-protein synthase III activity"/>
    <property type="evidence" value="ECO:0007669"/>
    <property type="project" value="UniProtKB-UniRule"/>
</dbReference>
<dbReference type="GO" id="GO:0006633">
    <property type="term" value="P:fatty acid biosynthetic process"/>
    <property type="evidence" value="ECO:0007669"/>
    <property type="project" value="UniProtKB-UniRule"/>
</dbReference>
<dbReference type="CDD" id="cd00830">
    <property type="entry name" value="KAS_III"/>
    <property type="match status" value="1"/>
</dbReference>
<dbReference type="FunFam" id="3.40.47.10:FF:000004">
    <property type="entry name" value="3-oxoacyl-[acyl-carrier-protein] synthase 3"/>
    <property type="match status" value="1"/>
</dbReference>
<dbReference type="Gene3D" id="3.40.47.10">
    <property type="match status" value="1"/>
</dbReference>
<dbReference type="HAMAP" id="MF_01815">
    <property type="entry name" value="FabH"/>
    <property type="match status" value="1"/>
</dbReference>
<dbReference type="InterPro" id="IPR013747">
    <property type="entry name" value="ACP_syn_III_C"/>
</dbReference>
<dbReference type="InterPro" id="IPR013751">
    <property type="entry name" value="ACP_syn_III_N"/>
</dbReference>
<dbReference type="InterPro" id="IPR004655">
    <property type="entry name" value="FabH"/>
</dbReference>
<dbReference type="InterPro" id="IPR016039">
    <property type="entry name" value="Thiolase-like"/>
</dbReference>
<dbReference type="NCBIfam" id="TIGR00747">
    <property type="entry name" value="fabH"/>
    <property type="match status" value="1"/>
</dbReference>
<dbReference type="NCBIfam" id="NF006829">
    <property type="entry name" value="PRK09352.1"/>
    <property type="match status" value="1"/>
</dbReference>
<dbReference type="PANTHER" id="PTHR43091">
    <property type="entry name" value="3-OXOACYL-[ACYL-CARRIER-PROTEIN] SYNTHASE"/>
    <property type="match status" value="1"/>
</dbReference>
<dbReference type="PANTHER" id="PTHR43091:SF1">
    <property type="entry name" value="BETA-KETOACYL-[ACYL-CARRIER-PROTEIN] SYNTHASE III, CHLOROPLASTIC"/>
    <property type="match status" value="1"/>
</dbReference>
<dbReference type="Pfam" id="PF08545">
    <property type="entry name" value="ACP_syn_III"/>
    <property type="match status" value="1"/>
</dbReference>
<dbReference type="Pfam" id="PF08541">
    <property type="entry name" value="ACP_syn_III_C"/>
    <property type="match status" value="1"/>
</dbReference>
<dbReference type="SUPFAM" id="SSF53901">
    <property type="entry name" value="Thiolase-like"/>
    <property type="match status" value="1"/>
</dbReference>
<accession>Q3SIM4</accession>
<comment type="function">
    <text evidence="1">Catalyzes the condensation reaction of fatty acid synthesis by the addition to an acyl acceptor of two carbons from malonyl-ACP. Catalyzes the first condensation reaction which initiates fatty acid synthesis and may therefore play a role in governing the total rate of fatty acid production. Possesses both acetoacetyl-ACP synthase and acetyl transacylase activities. Its substrate specificity determines the biosynthesis of branched-chain and/or straight-chain of fatty acids.</text>
</comment>
<comment type="catalytic activity">
    <reaction evidence="1">
        <text>malonyl-[ACP] + acetyl-CoA + H(+) = 3-oxobutanoyl-[ACP] + CO2 + CoA</text>
        <dbReference type="Rhea" id="RHEA:12080"/>
        <dbReference type="Rhea" id="RHEA-COMP:9623"/>
        <dbReference type="Rhea" id="RHEA-COMP:9625"/>
        <dbReference type="ChEBI" id="CHEBI:15378"/>
        <dbReference type="ChEBI" id="CHEBI:16526"/>
        <dbReference type="ChEBI" id="CHEBI:57287"/>
        <dbReference type="ChEBI" id="CHEBI:57288"/>
        <dbReference type="ChEBI" id="CHEBI:78449"/>
        <dbReference type="ChEBI" id="CHEBI:78450"/>
        <dbReference type="EC" id="2.3.1.180"/>
    </reaction>
</comment>
<comment type="pathway">
    <text evidence="1">Lipid metabolism; fatty acid biosynthesis.</text>
</comment>
<comment type="subunit">
    <text evidence="1">Homodimer.</text>
</comment>
<comment type="subcellular location">
    <subcellularLocation>
        <location evidence="1">Cytoplasm</location>
    </subcellularLocation>
</comment>
<comment type="domain">
    <text evidence="1">The last Arg residue of the ACP-binding site is essential for the weak association between ACP/AcpP and FabH.</text>
</comment>
<comment type="similarity">
    <text evidence="1">Belongs to the thiolase-like superfamily. FabH family.</text>
</comment>
<name>FABH_THIDA</name>
<reference key="1">
    <citation type="journal article" date="2006" name="J. Bacteriol.">
        <title>The genome sequence of the obligately chemolithoautotrophic, facultatively anaerobic bacterium Thiobacillus denitrificans.</title>
        <authorList>
            <person name="Beller H.R."/>
            <person name="Chain P.S."/>
            <person name="Letain T.E."/>
            <person name="Chakicherla A."/>
            <person name="Larimer F.W."/>
            <person name="Richardson P.M."/>
            <person name="Coleman M.A."/>
            <person name="Wood A.P."/>
            <person name="Kelly D.P."/>
        </authorList>
    </citation>
    <scope>NUCLEOTIDE SEQUENCE [LARGE SCALE GENOMIC DNA]</scope>
    <source>
        <strain>ATCC 25259 / T1</strain>
    </source>
</reference>